<protein>
    <recommendedName>
        <fullName evidence="1">Cytochrome b6</fullName>
    </recommendedName>
</protein>
<name>CYB6_EUGGR</name>
<evidence type="ECO:0000255" key="1">
    <source>
        <dbReference type="HAMAP-Rule" id="MF_00633"/>
    </source>
</evidence>
<evidence type="ECO:0000269" key="2">
    <source>
    </source>
</evidence>
<geneLocation type="chloroplast"/>
<proteinExistence type="evidence at protein level"/>
<keyword id="KW-0150">Chloroplast</keyword>
<keyword id="KW-0903">Direct protein sequencing</keyword>
<keyword id="KW-0249">Electron transport</keyword>
<keyword id="KW-0349">Heme</keyword>
<keyword id="KW-0408">Iron</keyword>
<keyword id="KW-0472">Membrane</keyword>
<keyword id="KW-0479">Metal-binding</keyword>
<keyword id="KW-0602">Photosynthesis</keyword>
<keyword id="KW-0934">Plastid</keyword>
<keyword id="KW-0793">Thylakoid</keyword>
<keyword id="KW-0812">Transmembrane</keyword>
<keyword id="KW-1133">Transmembrane helix</keyword>
<keyword id="KW-0813">Transport</keyword>
<sequence>MSRVYDWFEERLEIQAIADDVSSKYVPPHVNIFYCLGGITFTCFIIQVATGFAMTFYYRPTVTEAFLSVKYIMNEVNFGWLIRSIHRWSASMMVLMMILHVCRVYLTGGFKKPRELTWVTGIILAILTVSFGVTGYSLPWDQVGYWAVKIVTGVPEAIPLIGNFIVELLRGSVSVGQSTLTRFYSLHTFVLPLLTATFMLGHFLMIRKQGISGPL</sequence>
<organism>
    <name type="scientific">Euglena gracilis</name>
    <dbReference type="NCBI Taxonomy" id="3039"/>
    <lineage>
        <taxon>Eukaryota</taxon>
        <taxon>Discoba</taxon>
        <taxon>Euglenozoa</taxon>
        <taxon>Euglenida</taxon>
        <taxon>Spirocuta</taxon>
        <taxon>Euglenophyceae</taxon>
        <taxon>Euglenales</taxon>
        <taxon>Euglenaceae</taxon>
        <taxon>Euglena</taxon>
    </lineage>
</organism>
<gene>
    <name evidence="1" type="primary">petB</name>
</gene>
<reference key="1">
    <citation type="journal article" date="1994" name="Curr. Genet.">
        <title>Gene structure and expression of a novel Euglena gracilis chloroplast operon encoding cytochrome b6 and the beta and epsilon subunits of the H(+)-ATP synthase complex.</title>
        <authorList>
            <person name="Hong L."/>
            <person name="Hallick R.B."/>
        </authorList>
    </citation>
    <scope>NUCLEOTIDE SEQUENCE [GENOMIC DNA]</scope>
    <source>
        <strain>Z / UTEX 753</strain>
    </source>
</reference>
<reference key="2">
    <citation type="journal article" date="1993" name="Nucleic Acids Res.">
        <title>Complete sequence of Euglena gracilis chloroplast DNA.</title>
        <authorList>
            <person name="Hallick R.B."/>
            <person name="Hong L."/>
            <person name="Drager R.G."/>
            <person name="Favreau M.R."/>
            <person name="Monfort A."/>
            <person name="Orsat B."/>
            <person name="Spielmann A."/>
            <person name="Stutz E."/>
        </authorList>
    </citation>
    <scope>NUCLEOTIDE SEQUENCE [LARGE SCALE GENOMIC DNA]</scope>
    <source>
        <strain>Z / UTEX 753</strain>
    </source>
</reference>
<reference key="3">
    <citation type="journal article" date="2003" name="Biochim. Biophys. Acta">
        <title>Cytochrome f and subunit IV, two essential components of the photosynthetic bf complex typically encoded in the chloroplast genome, are nucleus-encoded in Euglena gracilis.</title>
        <authorList>
            <person name="Santillan Torres J.L."/>
            <person name="Atteia A."/>
            <person name="Claros M.G."/>
            <person name="Gonzalez-Halphen D."/>
        </authorList>
    </citation>
    <scope>PROTEIN SEQUENCE OF 2-31</scope>
    <scope>SUBCELLULAR LOCATION</scope>
</reference>
<feature type="initiator methionine" description="Removed" evidence="2">
    <location>
        <position position="1"/>
    </location>
</feature>
<feature type="chain" id="PRO_0000061793" description="Cytochrome b6">
    <location>
        <begin position="2"/>
        <end position="215"/>
    </location>
</feature>
<feature type="transmembrane region" description="Helical" evidence="1">
    <location>
        <begin position="32"/>
        <end position="52"/>
    </location>
</feature>
<feature type="transmembrane region" description="Helical" evidence="1">
    <location>
        <begin position="90"/>
        <end position="110"/>
    </location>
</feature>
<feature type="transmembrane region" description="Helical" evidence="1">
    <location>
        <begin position="116"/>
        <end position="136"/>
    </location>
</feature>
<feature type="transmembrane region" description="Helical" evidence="1">
    <location>
        <begin position="186"/>
        <end position="206"/>
    </location>
</feature>
<feature type="binding site" description="covalent" evidence="1">
    <location>
        <position position="35"/>
    </location>
    <ligand>
        <name>heme c</name>
        <dbReference type="ChEBI" id="CHEBI:61717"/>
    </ligand>
</feature>
<feature type="binding site" description="axial binding residue" evidence="1">
    <location>
        <position position="86"/>
    </location>
    <ligand>
        <name>heme b</name>
        <dbReference type="ChEBI" id="CHEBI:60344"/>
        <label>2</label>
    </ligand>
    <ligandPart>
        <name>Fe</name>
        <dbReference type="ChEBI" id="CHEBI:18248"/>
    </ligandPart>
</feature>
<feature type="binding site" description="axial binding residue" evidence="1">
    <location>
        <position position="100"/>
    </location>
    <ligand>
        <name>heme b</name>
        <dbReference type="ChEBI" id="CHEBI:60344"/>
        <label>1</label>
    </ligand>
    <ligandPart>
        <name>Fe</name>
        <dbReference type="ChEBI" id="CHEBI:18248"/>
    </ligandPart>
</feature>
<feature type="binding site" description="axial binding residue" evidence="1">
    <location>
        <position position="187"/>
    </location>
    <ligand>
        <name>heme b</name>
        <dbReference type="ChEBI" id="CHEBI:60344"/>
        <label>2</label>
    </ligand>
    <ligandPart>
        <name>Fe</name>
        <dbReference type="ChEBI" id="CHEBI:18248"/>
    </ligandPart>
</feature>
<feature type="binding site" description="axial binding residue" evidence="1">
    <location>
        <position position="202"/>
    </location>
    <ligand>
        <name>heme b</name>
        <dbReference type="ChEBI" id="CHEBI:60344"/>
        <label>1</label>
    </ligand>
    <ligandPart>
        <name>Fe</name>
        <dbReference type="ChEBI" id="CHEBI:18248"/>
    </ligandPart>
</feature>
<accession>P31480</accession>
<comment type="function">
    <text evidence="1">Component of the cytochrome b6-f complex, which mediates electron transfer between photosystem II (PSII) and photosystem I (PSI), cyclic electron flow around PSI, and state transitions.</text>
</comment>
<comment type="cofactor">
    <cofactor evidence="1">
        <name>heme b</name>
        <dbReference type="ChEBI" id="CHEBI:60344"/>
    </cofactor>
    <text evidence="1">Binds 2 heme b groups non-covalently with two histidine residues as axial ligands.</text>
</comment>
<comment type="cofactor">
    <cofactor evidence="1">
        <name>heme c</name>
        <dbReference type="ChEBI" id="CHEBI:61717"/>
    </cofactor>
    <text evidence="1">Binds one heme group covalently by a single cysteine link with no axial amino acid ligand. This heme was named heme ci.</text>
</comment>
<comment type="subunit">
    <text evidence="1">The 4 large subunits of the cytochrome b6-f complex are cytochrome b6, subunit IV (17 kDa polypeptide, PetD), cytochrome f and the Rieske protein, while the 4 small subunits are PetG, PetL, PetM and PetN. The complex functions as a dimer.</text>
</comment>
<comment type="subcellular location">
    <subcellularLocation>
        <location evidence="1">Plastid</location>
        <location evidence="1">Chloroplast thylakoid membrane</location>
        <topology evidence="1">Multi-pass membrane protein</topology>
    </subcellularLocation>
</comment>
<comment type="miscellaneous">
    <text evidence="1">Heme 1 (or BH or b566) is high-potential and absorbs at about 566 nm, and heme 2 (or BL or b562) is low-potential and absorbs at about 562 nm.</text>
</comment>
<comment type="similarity">
    <text evidence="1">Belongs to the cytochrome b family. PetB subfamily.</text>
</comment>
<dbReference type="EMBL" id="X70810">
    <property type="protein sequence ID" value="CAA50129.1"/>
    <property type="molecule type" value="Genomic_DNA"/>
</dbReference>
<dbReference type="PIR" id="S34548">
    <property type="entry name" value="S34548"/>
</dbReference>
<dbReference type="RefSeq" id="NP_041942.1">
    <property type="nucleotide sequence ID" value="NC_001603.2"/>
</dbReference>
<dbReference type="SMR" id="P31480"/>
<dbReference type="GeneID" id="807480"/>
<dbReference type="GO" id="GO:0009535">
    <property type="term" value="C:chloroplast thylakoid membrane"/>
    <property type="evidence" value="ECO:0007669"/>
    <property type="project" value="UniProtKB-SubCell"/>
</dbReference>
<dbReference type="GO" id="GO:0009512">
    <property type="term" value="C:cytochrome b6f complex"/>
    <property type="evidence" value="ECO:0000314"/>
    <property type="project" value="UniProtKB"/>
</dbReference>
<dbReference type="GO" id="GO:0045158">
    <property type="term" value="F:electron transporter, transferring electrons within cytochrome b6/f complex of photosystem II activity"/>
    <property type="evidence" value="ECO:0007669"/>
    <property type="project" value="UniProtKB-UniRule"/>
</dbReference>
<dbReference type="GO" id="GO:0046872">
    <property type="term" value="F:metal ion binding"/>
    <property type="evidence" value="ECO:0007669"/>
    <property type="project" value="UniProtKB-KW"/>
</dbReference>
<dbReference type="GO" id="GO:0016491">
    <property type="term" value="F:oxidoreductase activity"/>
    <property type="evidence" value="ECO:0007669"/>
    <property type="project" value="InterPro"/>
</dbReference>
<dbReference type="GO" id="GO:0009767">
    <property type="term" value="P:photosynthetic electron transport chain"/>
    <property type="evidence" value="ECO:0000303"/>
    <property type="project" value="UniProtKB"/>
</dbReference>
<dbReference type="GO" id="GO:0022904">
    <property type="term" value="P:respiratory electron transport chain"/>
    <property type="evidence" value="ECO:0007669"/>
    <property type="project" value="InterPro"/>
</dbReference>
<dbReference type="CDD" id="cd00284">
    <property type="entry name" value="Cytochrome_b_N"/>
    <property type="match status" value="1"/>
</dbReference>
<dbReference type="FunFam" id="1.20.810.10:FF:000001">
    <property type="entry name" value="Cytochrome b6"/>
    <property type="match status" value="1"/>
</dbReference>
<dbReference type="Gene3D" id="1.20.810.10">
    <property type="entry name" value="Cytochrome Bc1 Complex, Chain C"/>
    <property type="match status" value="1"/>
</dbReference>
<dbReference type="HAMAP" id="MF_00633">
    <property type="entry name" value="Cytb6_f_cytb6"/>
    <property type="match status" value="1"/>
</dbReference>
<dbReference type="InterPro" id="IPR005797">
    <property type="entry name" value="Cyt_b/b6_N"/>
</dbReference>
<dbReference type="InterPro" id="IPR023530">
    <property type="entry name" value="Cyt_B6_PetB"/>
</dbReference>
<dbReference type="InterPro" id="IPR027387">
    <property type="entry name" value="Cytb/b6-like_sf"/>
</dbReference>
<dbReference type="InterPro" id="IPR048259">
    <property type="entry name" value="Cytochrome_b_N_euk/bac"/>
</dbReference>
<dbReference type="InterPro" id="IPR016174">
    <property type="entry name" value="Di-haem_cyt_TM"/>
</dbReference>
<dbReference type="NCBIfam" id="NF002990">
    <property type="entry name" value="PRK03735.1"/>
    <property type="match status" value="1"/>
</dbReference>
<dbReference type="PANTHER" id="PTHR19271">
    <property type="entry name" value="CYTOCHROME B"/>
    <property type="match status" value="1"/>
</dbReference>
<dbReference type="PANTHER" id="PTHR19271:SF16">
    <property type="entry name" value="CYTOCHROME B"/>
    <property type="match status" value="1"/>
</dbReference>
<dbReference type="Pfam" id="PF00033">
    <property type="entry name" value="Cytochrome_B"/>
    <property type="match status" value="1"/>
</dbReference>
<dbReference type="PIRSF" id="PIRSF000032">
    <property type="entry name" value="Cytochrome_b6"/>
    <property type="match status" value="1"/>
</dbReference>
<dbReference type="SUPFAM" id="SSF81342">
    <property type="entry name" value="Transmembrane di-heme cytochromes"/>
    <property type="match status" value="1"/>
</dbReference>
<dbReference type="PROSITE" id="PS51002">
    <property type="entry name" value="CYTB_NTER"/>
    <property type="match status" value="1"/>
</dbReference>